<comment type="function">
    <text evidence="2">Has antibacterial activity against Gram-positive bacteria.</text>
</comment>
<comment type="subcellular location">
    <subcellularLocation>
        <location evidence="3 4">Secreted</location>
    </subcellularLocation>
</comment>
<comment type="tissue specificity">
    <text evidence="8 9">Expressed by the skin glands.</text>
</comment>
<comment type="mass spectrometry" mass="1360.88" method="Electrospray" evidence="3"/>
<comment type="similarity">
    <text evidence="7">Belongs to the frog skin active peptide (FSAP) family. Temporin subfamily.</text>
</comment>
<comment type="online information" name="The antimicrobial peptide database">
    <link uri="https://wangapd3.com/database/query_output.php?ID=00096"/>
</comment>
<name>TPC_RANTE</name>
<sequence length="13" mass="1363">LLPILGNLLNGLL</sequence>
<reference key="1">
    <citation type="journal article" date="1996" name="Eur. J. Biochem.">
        <title>Temporins, antimicrobial peptides from the European red frog Rana temporaria.</title>
        <authorList>
            <person name="Simmaco M."/>
            <person name="Mignogna G."/>
            <person name="Canofeni S."/>
            <person name="Miele R."/>
            <person name="Mangoni M.L."/>
            <person name="Barra D."/>
        </authorList>
    </citation>
    <scope>PROTEIN SEQUENCE</scope>
    <scope>AMIDATION AT LEU-13</scope>
    <scope>SUBCELLULAR LOCATION</scope>
    <source>
        <tissue>Skin secretion</tissue>
    </source>
</reference>
<reference key="2">
    <citation type="journal article" date="2021" name="Anal. Bioanal. Chem.">
        <title>Differentiation of Central Slovenian and Moscow populations of Rana temporaria frogs using peptide biomarkers of temporins family.</title>
        <authorList>
            <person name="Samgina T.Y."/>
            <person name="Vasileva I.D."/>
            <person name="Kovalev S.V."/>
            <person name="Trebse P."/>
            <person name="Torkar G."/>
            <person name="Surin A.K."/>
            <person name="Zubarev R.A."/>
            <person name="Lebedev A.T."/>
        </authorList>
    </citation>
    <scope>PROTEIN SEQUENCE</scope>
    <scope>IDENTIFICATION BY MASS SPECTROMETRY</scope>
    <scope>SUBCELLULAR LOCATION</scope>
    <scope>AMIDATION AT LEU-13</scope>
    <source>
        <tissue evidence="5">Skin secretion</tissue>
    </source>
</reference>
<accession>P56918</accession>
<protein>
    <recommendedName>
        <fullName evidence="1">Temporin-1Tc</fullName>
        <shortName evidence="1">TC</shortName>
    </recommendedName>
    <alternativeName>
        <fullName evidence="6">Temporin-C</fullName>
    </alternativeName>
</protein>
<keyword id="KW-0027">Amidation</keyword>
<keyword id="KW-0878">Amphibian defense peptide</keyword>
<keyword id="KW-0044">Antibiotic</keyword>
<keyword id="KW-0929">Antimicrobial</keyword>
<keyword id="KW-0903">Direct protein sequencing</keyword>
<keyword id="KW-0391">Immunity</keyword>
<keyword id="KW-0399">Innate immunity</keyword>
<keyword id="KW-0964">Secreted</keyword>
<dbReference type="GO" id="GO:0005576">
    <property type="term" value="C:extracellular region"/>
    <property type="evidence" value="ECO:0000314"/>
    <property type="project" value="UniProtKB"/>
</dbReference>
<dbReference type="GO" id="GO:0050830">
    <property type="term" value="P:defense response to Gram-positive bacterium"/>
    <property type="evidence" value="ECO:0000314"/>
    <property type="project" value="UniProtKB"/>
</dbReference>
<dbReference type="GO" id="GO:0045087">
    <property type="term" value="P:innate immune response"/>
    <property type="evidence" value="ECO:0007669"/>
    <property type="project" value="UniProtKB-KW"/>
</dbReference>
<organism>
    <name type="scientific">Rana temporaria</name>
    <name type="common">European common frog</name>
    <dbReference type="NCBI Taxonomy" id="8407"/>
    <lineage>
        <taxon>Eukaryota</taxon>
        <taxon>Metazoa</taxon>
        <taxon>Chordata</taxon>
        <taxon>Craniata</taxon>
        <taxon>Vertebrata</taxon>
        <taxon>Euteleostomi</taxon>
        <taxon>Amphibia</taxon>
        <taxon>Batrachia</taxon>
        <taxon>Anura</taxon>
        <taxon>Neobatrachia</taxon>
        <taxon>Ranoidea</taxon>
        <taxon>Ranidae</taxon>
        <taxon>Rana</taxon>
        <taxon>Rana</taxon>
    </lineage>
</organism>
<proteinExistence type="evidence at protein level"/>
<feature type="peptide" id="PRO_0000043580" description="Temporin-1Tc" evidence="4">
    <location>
        <begin position="1"/>
        <end position="13"/>
    </location>
</feature>
<feature type="modified residue" description="Leucine amide" evidence="3 4">
    <location>
        <position position="13"/>
    </location>
</feature>
<evidence type="ECO:0000250" key="1">
    <source>
        <dbReference type="UniProtKB" id="P56917"/>
    </source>
</evidence>
<evidence type="ECO:0000250" key="2">
    <source>
        <dbReference type="UniProtKB" id="P56919"/>
    </source>
</evidence>
<evidence type="ECO:0000269" key="3">
    <source>
    </source>
</evidence>
<evidence type="ECO:0000269" key="4">
    <source>
    </source>
</evidence>
<evidence type="ECO:0000303" key="5">
    <source>
    </source>
</evidence>
<evidence type="ECO:0000303" key="6">
    <source>
    </source>
</evidence>
<evidence type="ECO:0000305" key="7"/>
<evidence type="ECO:0000305" key="8">
    <source>
    </source>
</evidence>
<evidence type="ECO:0000305" key="9">
    <source>
    </source>
</evidence>